<comment type="function">
    <text evidence="1">Displays ATPase and GTPase activities.</text>
</comment>
<comment type="similarity">
    <text evidence="1">Belongs to the RapZ-like family.</text>
</comment>
<accession>Q2RLU6</accession>
<reference key="1">
    <citation type="journal article" date="2008" name="Environ. Microbiol.">
        <title>The complete genome sequence of Moorella thermoacetica (f. Clostridium thermoaceticum).</title>
        <authorList>
            <person name="Pierce E."/>
            <person name="Xie G."/>
            <person name="Barabote R.D."/>
            <person name="Saunders E."/>
            <person name="Han C.S."/>
            <person name="Detter J.C."/>
            <person name="Richardson P."/>
            <person name="Brettin T.S."/>
            <person name="Das A."/>
            <person name="Ljungdahl L.G."/>
            <person name="Ragsdale S.W."/>
        </authorList>
    </citation>
    <scope>NUCLEOTIDE SEQUENCE [LARGE SCALE GENOMIC DNA]</scope>
    <source>
        <strain>ATCC 39073 / JCM 9320</strain>
    </source>
</reference>
<gene>
    <name type="ordered locus">Moth_0258</name>
</gene>
<dbReference type="EMBL" id="CP000232">
    <property type="protein sequence ID" value="ABC18593.1"/>
    <property type="molecule type" value="Genomic_DNA"/>
</dbReference>
<dbReference type="RefSeq" id="YP_429136.1">
    <property type="nucleotide sequence ID" value="NC_007644.1"/>
</dbReference>
<dbReference type="SMR" id="Q2RLU6"/>
<dbReference type="STRING" id="264732.Moth_0258"/>
<dbReference type="EnsemblBacteria" id="ABC18593">
    <property type="protein sequence ID" value="ABC18593"/>
    <property type="gene ID" value="Moth_0258"/>
</dbReference>
<dbReference type="KEGG" id="mta:Moth_0258"/>
<dbReference type="PATRIC" id="fig|264732.11.peg.274"/>
<dbReference type="eggNOG" id="COG1660">
    <property type="taxonomic scope" value="Bacteria"/>
</dbReference>
<dbReference type="HOGENOM" id="CLU_059558_0_0_9"/>
<dbReference type="OrthoDB" id="9784461at2"/>
<dbReference type="GO" id="GO:0005524">
    <property type="term" value="F:ATP binding"/>
    <property type="evidence" value="ECO:0007669"/>
    <property type="project" value="UniProtKB-UniRule"/>
</dbReference>
<dbReference type="GO" id="GO:0005525">
    <property type="term" value="F:GTP binding"/>
    <property type="evidence" value="ECO:0007669"/>
    <property type="project" value="UniProtKB-UniRule"/>
</dbReference>
<dbReference type="Gene3D" id="3.40.50.300">
    <property type="entry name" value="P-loop containing nucleotide triphosphate hydrolases"/>
    <property type="match status" value="1"/>
</dbReference>
<dbReference type="HAMAP" id="MF_00636">
    <property type="entry name" value="RapZ_like"/>
    <property type="match status" value="1"/>
</dbReference>
<dbReference type="InterPro" id="IPR027417">
    <property type="entry name" value="P-loop_NTPase"/>
</dbReference>
<dbReference type="InterPro" id="IPR005337">
    <property type="entry name" value="RapZ-like"/>
</dbReference>
<dbReference type="InterPro" id="IPR053930">
    <property type="entry name" value="RapZ-like_N"/>
</dbReference>
<dbReference type="InterPro" id="IPR053931">
    <property type="entry name" value="RapZ_C"/>
</dbReference>
<dbReference type="NCBIfam" id="NF003828">
    <property type="entry name" value="PRK05416.1"/>
    <property type="match status" value="1"/>
</dbReference>
<dbReference type="PANTHER" id="PTHR30448">
    <property type="entry name" value="RNASE ADAPTER PROTEIN RAPZ"/>
    <property type="match status" value="1"/>
</dbReference>
<dbReference type="PANTHER" id="PTHR30448:SF0">
    <property type="entry name" value="RNASE ADAPTER PROTEIN RAPZ"/>
    <property type="match status" value="1"/>
</dbReference>
<dbReference type="Pfam" id="PF22740">
    <property type="entry name" value="PapZ_C"/>
    <property type="match status" value="1"/>
</dbReference>
<dbReference type="Pfam" id="PF03668">
    <property type="entry name" value="RapZ-like_N"/>
    <property type="match status" value="1"/>
</dbReference>
<dbReference type="PIRSF" id="PIRSF005052">
    <property type="entry name" value="P-loopkin"/>
    <property type="match status" value="1"/>
</dbReference>
<dbReference type="SUPFAM" id="SSF52540">
    <property type="entry name" value="P-loop containing nucleoside triphosphate hydrolases"/>
    <property type="match status" value="1"/>
</dbReference>
<sequence>MPETKYPRLVIVTGLSGAGKTQAVRCLEDLGFFCVDNLPPSLIPGLVDLLGHPGKEGEGITKVALVMDIRGGEFFSGLDAALNYLDGLGIPYEILFLEAADEVLVRRYKETRRRHPLSSGGQILEGIIEERRRLEELRGRASKIIDTSELTPRQLKEQVSELFGSSQRRLIVSIISFGYKYGIPLDADLVMDVRFLPNPYYVPALRPFTGHDRCVEEFVMASPVTRQFIEQFAALLRFLIPHYLQEGKSHLVVAIGCTGGQHRSVTLANKLGELLQGENYSVTVKHRDVVRYLSTGNRR</sequence>
<protein>
    <recommendedName>
        <fullName evidence="1">Nucleotide-binding protein Moth_0258</fullName>
    </recommendedName>
</protein>
<keyword id="KW-0067">ATP-binding</keyword>
<keyword id="KW-0342">GTP-binding</keyword>
<keyword id="KW-0547">Nucleotide-binding</keyword>
<evidence type="ECO:0000255" key="1">
    <source>
        <dbReference type="HAMAP-Rule" id="MF_00636"/>
    </source>
</evidence>
<feature type="chain" id="PRO_0000258973" description="Nucleotide-binding protein Moth_0258">
    <location>
        <begin position="1"/>
        <end position="299"/>
    </location>
</feature>
<feature type="binding site" evidence="1">
    <location>
        <begin position="14"/>
        <end position="21"/>
    </location>
    <ligand>
        <name>ATP</name>
        <dbReference type="ChEBI" id="CHEBI:30616"/>
    </ligand>
</feature>
<feature type="binding site" evidence="1">
    <location>
        <begin position="68"/>
        <end position="71"/>
    </location>
    <ligand>
        <name>GTP</name>
        <dbReference type="ChEBI" id="CHEBI:37565"/>
    </ligand>
</feature>
<proteinExistence type="inferred from homology"/>
<organism>
    <name type="scientific">Moorella thermoacetica (strain ATCC 39073 / JCM 9320)</name>
    <dbReference type="NCBI Taxonomy" id="264732"/>
    <lineage>
        <taxon>Bacteria</taxon>
        <taxon>Bacillati</taxon>
        <taxon>Bacillota</taxon>
        <taxon>Clostridia</taxon>
        <taxon>Moorellales</taxon>
        <taxon>Moorellaceae</taxon>
        <taxon>Moorella</taxon>
    </lineage>
</organism>
<name>Y258_MOOTA</name>